<proteinExistence type="inferred from homology"/>
<feature type="chain" id="PRO_0000383727" description="Cytosolic Fe-S cluster assembly factor NAR1">
    <location>
        <begin position="1"/>
        <end position="545"/>
    </location>
</feature>
<feature type="region of interest" description="Disordered" evidence="3">
    <location>
        <begin position="401"/>
        <end position="438"/>
    </location>
</feature>
<feature type="compositionally biased region" description="Polar residues" evidence="3">
    <location>
        <begin position="426"/>
        <end position="438"/>
    </location>
</feature>
<feature type="binding site" evidence="2">
    <location>
        <position position="20"/>
    </location>
    <ligand>
        <name>[4Fe-4S] cluster</name>
        <dbReference type="ChEBI" id="CHEBI:49883"/>
        <label>1</label>
    </ligand>
</feature>
<feature type="binding site" evidence="2">
    <location>
        <position position="72"/>
    </location>
    <ligand>
        <name>[4Fe-4S] cluster</name>
        <dbReference type="ChEBI" id="CHEBI:49883"/>
        <label>1</label>
    </ligand>
</feature>
<feature type="binding site" evidence="2">
    <location>
        <position position="75"/>
    </location>
    <ligand>
        <name>[4Fe-4S] cluster</name>
        <dbReference type="ChEBI" id="CHEBI:49883"/>
        <label>1</label>
    </ligand>
</feature>
<feature type="binding site" evidence="2">
    <location>
        <position position="78"/>
    </location>
    <ligand>
        <name>[4Fe-4S] cluster</name>
        <dbReference type="ChEBI" id="CHEBI:49883"/>
        <label>1</label>
    </ligand>
</feature>
<feature type="binding site" evidence="2">
    <location>
        <position position="186"/>
    </location>
    <ligand>
        <name>[4Fe-4S] cluster</name>
        <dbReference type="ChEBI" id="CHEBI:49883"/>
        <label>2</label>
    </ligand>
</feature>
<feature type="binding site" evidence="2">
    <location>
        <position position="241"/>
    </location>
    <ligand>
        <name>[4Fe-4S] cluster</name>
        <dbReference type="ChEBI" id="CHEBI:49883"/>
        <label>2</label>
    </ligand>
</feature>
<feature type="binding site" evidence="2">
    <location>
        <position position="453"/>
    </location>
    <ligand>
        <name>[4Fe-4S] cluster</name>
        <dbReference type="ChEBI" id="CHEBI:49883"/>
        <label>2</label>
    </ligand>
</feature>
<feature type="binding site" evidence="2">
    <location>
        <position position="457"/>
    </location>
    <ligand>
        <name>[4Fe-4S] cluster</name>
        <dbReference type="ChEBI" id="CHEBI:49883"/>
        <label>2</label>
    </ligand>
</feature>
<protein>
    <recommendedName>
        <fullName>Cytosolic Fe-S cluster assembly factor NAR1</fullName>
    </recommendedName>
    <alternativeName>
        <fullName>Nuclear architecture-related protein 1</fullName>
    </alternativeName>
</protein>
<name>NAR1_DEBHA</name>
<sequence length="545" mass="60075">MSAILSADDLNDFISPGVACIKPPAENVNRDTNNENGEVDIQIDNEGNPIEISRLDGTATSLSAAQISLADCLACSGCITSAEEILVAQHSHNELIKALKEKVQNKTDKVFVASISHQSRASLATAYNLTVEEVDRLLINLFINQMGFSYIVGTSLGRKLSLIYESQNIISKKEEKFEGPTLSSICPGWVLYAEKTHPYVLPRISDVKSPQQITGCLLKTLTARDLNTTRDNIYHLSIMPCFDKKLESARPEKGEPESAPNDVDCVLTAKELITLLDEHSDDFSLFPPQVESILSASLVSTTELYTKCAPKNWPFVDLSWSNDNGSSSGGYAYHYIKLAQEHLILKDPSTYQPENFTLKTISGRNSDIYELRLIYKDATVASAAIVNGFRNIQNLVRKLKPSTKQTSTVKANPLASRRRARLASKTDGTASSNNATQDTADASKCDYVEIMACPNGCINGGGQINPPADVPEKEWLTKASENYTNIPSYDLLSAGSNGNMLSELIEWCQEFCKEFDLNQNRLLKTWFHEVEQSTDPNAILLGAKW</sequence>
<evidence type="ECO:0000250" key="1"/>
<evidence type="ECO:0000255" key="2"/>
<evidence type="ECO:0000256" key="3">
    <source>
        <dbReference type="SAM" id="MobiDB-lite"/>
    </source>
</evidence>
<evidence type="ECO:0000305" key="4"/>
<accession>Q6BUI4</accession>
<keyword id="KW-0004">4Fe-4S</keyword>
<keyword id="KW-0408">Iron</keyword>
<keyword id="KW-0411">Iron-sulfur</keyword>
<keyword id="KW-0479">Metal-binding</keyword>
<keyword id="KW-1185">Reference proteome</keyword>
<dbReference type="EMBL" id="CR382135">
    <property type="protein sequence ID" value="CAG86206.2"/>
    <property type="molecule type" value="Genomic_DNA"/>
</dbReference>
<dbReference type="RefSeq" id="XP_458135.2">
    <property type="nucleotide sequence ID" value="XM_458135.1"/>
</dbReference>
<dbReference type="SMR" id="Q6BUI4"/>
<dbReference type="FunCoup" id="Q6BUI4">
    <property type="interactions" value="392"/>
</dbReference>
<dbReference type="STRING" id="284592.Q6BUI4"/>
<dbReference type="GeneID" id="2900737"/>
<dbReference type="KEGG" id="dha:DEHA2C10406g"/>
<dbReference type="VEuPathDB" id="FungiDB:DEHA2C10406g"/>
<dbReference type="eggNOG" id="KOG2439">
    <property type="taxonomic scope" value="Eukaryota"/>
</dbReference>
<dbReference type="HOGENOM" id="CLU_018240_0_1_1"/>
<dbReference type="InParanoid" id="Q6BUI4"/>
<dbReference type="OMA" id="GYLHHVL"/>
<dbReference type="OrthoDB" id="10253113at2759"/>
<dbReference type="Proteomes" id="UP000000599">
    <property type="component" value="Chromosome C"/>
</dbReference>
<dbReference type="GO" id="GO:0005829">
    <property type="term" value="C:cytosol"/>
    <property type="evidence" value="ECO:0007669"/>
    <property type="project" value="EnsemblFungi"/>
</dbReference>
<dbReference type="GO" id="GO:0016020">
    <property type="term" value="C:membrane"/>
    <property type="evidence" value="ECO:0007669"/>
    <property type="project" value="EnsemblFungi"/>
</dbReference>
<dbReference type="GO" id="GO:0051539">
    <property type="term" value="F:4 iron, 4 sulfur cluster binding"/>
    <property type="evidence" value="ECO:0007669"/>
    <property type="project" value="UniProtKB-KW"/>
</dbReference>
<dbReference type="GO" id="GO:0051536">
    <property type="term" value="F:iron-sulfur cluster binding"/>
    <property type="evidence" value="ECO:0000250"/>
    <property type="project" value="UniProtKB"/>
</dbReference>
<dbReference type="GO" id="GO:0046872">
    <property type="term" value="F:metal ion binding"/>
    <property type="evidence" value="ECO:0007669"/>
    <property type="project" value="UniProtKB-KW"/>
</dbReference>
<dbReference type="GO" id="GO:0016226">
    <property type="term" value="P:iron-sulfur cluster assembly"/>
    <property type="evidence" value="ECO:0000250"/>
    <property type="project" value="UniProtKB"/>
</dbReference>
<dbReference type="FunFam" id="3.40.50.1780:FF:000021">
    <property type="entry name" value="Cytosolic Fe-S cluster assembly factor NAR1 homolog"/>
    <property type="match status" value="1"/>
</dbReference>
<dbReference type="Gene3D" id="3.40.50.1780">
    <property type="match status" value="2"/>
</dbReference>
<dbReference type="Gene3D" id="3.40.950.10">
    <property type="entry name" value="Fe-only Hydrogenase (Larger Subunit), Chain L, domain 3"/>
    <property type="match status" value="2"/>
</dbReference>
<dbReference type="InterPro" id="IPR050340">
    <property type="entry name" value="Cytosolic_Fe-S_CAF"/>
</dbReference>
<dbReference type="InterPro" id="IPR009016">
    <property type="entry name" value="Fe_hydrogenase"/>
</dbReference>
<dbReference type="InterPro" id="IPR004108">
    <property type="entry name" value="Fe_hydrogenase_lsu_C"/>
</dbReference>
<dbReference type="PANTHER" id="PTHR11615">
    <property type="entry name" value="NITRATE, FORMATE, IRON DEHYDROGENASE"/>
    <property type="match status" value="1"/>
</dbReference>
<dbReference type="Pfam" id="PF02906">
    <property type="entry name" value="Fe_hyd_lg_C"/>
    <property type="match status" value="1"/>
</dbReference>
<dbReference type="SUPFAM" id="SSF53920">
    <property type="entry name" value="Fe-only hydrogenase"/>
    <property type="match status" value="1"/>
</dbReference>
<organism>
    <name type="scientific">Debaryomyces hansenii (strain ATCC 36239 / CBS 767 / BCRC 21394 / JCM 1990 / NBRC 0083 / IGC 2968)</name>
    <name type="common">Yeast</name>
    <name type="synonym">Torulaspora hansenii</name>
    <dbReference type="NCBI Taxonomy" id="284592"/>
    <lineage>
        <taxon>Eukaryota</taxon>
        <taxon>Fungi</taxon>
        <taxon>Dikarya</taxon>
        <taxon>Ascomycota</taxon>
        <taxon>Saccharomycotina</taxon>
        <taxon>Pichiomycetes</taxon>
        <taxon>Debaryomycetaceae</taxon>
        <taxon>Debaryomyces</taxon>
    </lineage>
</organism>
<comment type="function">
    <text evidence="1">Component of the cytosolic Fe/S protein assembly machinery. Required for maturation of extramitochondrial Fe/S proteins. May play a role in the transfer of pre-assembled Fe/S clusters to target apoproteins (By similarity).</text>
</comment>
<comment type="similarity">
    <text evidence="4">Belongs to the NARF family.</text>
</comment>
<reference key="1">
    <citation type="journal article" date="2004" name="Nature">
        <title>Genome evolution in yeasts.</title>
        <authorList>
            <person name="Dujon B."/>
            <person name="Sherman D."/>
            <person name="Fischer G."/>
            <person name="Durrens P."/>
            <person name="Casaregola S."/>
            <person name="Lafontaine I."/>
            <person name="de Montigny J."/>
            <person name="Marck C."/>
            <person name="Neuveglise C."/>
            <person name="Talla E."/>
            <person name="Goffard N."/>
            <person name="Frangeul L."/>
            <person name="Aigle M."/>
            <person name="Anthouard V."/>
            <person name="Babour A."/>
            <person name="Barbe V."/>
            <person name="Barnay S."/>
            <person name="Blanchin S."/>
            <person name="Beckerich J.-M."/>
            <person name="Beyne E."/>
            <person name="Bleykasten C."/>
            <person name="Boisrame A."/>
            <person name="Boyer J."/>
            <person name="Cattolico L."/>
            <person name="Confanioleri F."/>
            <person name="de Daruvar A."/>
            <person name="Despons L."/>
            <person name="Fabre E."/>
            <person name="Fairhead C."/>
            <person name="Ferry-Dumazet H."/>
            <person name="Groppi A."/>
            <person name="Hantraye F."/>
            <person name="Hennequin C."/>
            <person name="Jauniaux N."/>
            <person name="Joyet P."/>
            <person name="Kachouri R."/>
            <person name="Kerrest A."/>
            <person name="Koszul R."/>
            <person name="Lemaire M."/>
            <person name="Lesur I."/>
            <person name="Ma L."/>
            <person name="Muller H."/>
            <person name="Nicaud J.-M."/>
            <person name="Nikolski M."/>
            <person name="Oztas S."/>
            <person name="Ozier-Kalogeropoulos O."/>
            <person name="Pellenz S."/>
            <person name="Potier S."/>
            <person name="Richard G.-F."/>
            <person name="Straub M.-L."/>
            <person name="Suleau A."/>
            <person name="Swennen D."/>
            <person name="Tekaia F."/>
            <person name="Wesolowski-Louvel M."/>
            <person name="Westhof E."/>
            <person name="Wirth B."/>
            <person name="Zeniou-Meyer M."/>
            <person name="Zivanovic Y."/>
            <person name="Bolotin-Fukuhara M."/>
            <person name="Thierry A."/>
            <person name="Bouchier C."/>
            <person name="Caudron B."/>
            <person name="Scarpelli C."/>
            <person name="Gaillardin C."/>
            <person name="Weissenbach J."/>
            <person name="Wincker P."/>
            <person name="Souciet J.-L."/>
        </authorList>
    </citation>
    <scope>NUCLEOTIDE SEQUENCE [LARGE SCALE GENOMIC DNA]</scope>
    <source>
        <strain>ATCC 36239 / CBS 767 / BCRC 21394 / JCM 1990 / NBRC 0083 / IGC 2968</strain>
    </source>
</reference>
<gene>
    <name type="primary">NAR1</name>
    <name type="ordered locus">DEHA2C10406g</name>
</gene>